<protein>
    <recommendedName>
        <fullName evidence="1">Thymidylate kinase</fullName>
        <ecNumber evidence="1">2.7.4.9</ecNumber>
    </recommendedName>
    <alternativeName>
        <fullName evidence="1">dTMP kinase</fullName>
    </alternativeName>
</protein>
<accession>Q1QLT8</accession>
<sequence length="230" mass="24660">MTEAAPKVGLLRGRFITFEGGEGSGKSTQINILAERLNAAKLRAIVTREPGGSPGAEIIRHLVLSGMGKLLGAYAETLLFAAARDDHVHTVIKPALEQGIWVLCDRFADSTRAYQGRLGDVLPGVLNALERVTIGDLKPDLTVILDVPVEIGMQRAAVRRGSGAPDRFEAEDVAFHQKLRDAYRDIAASDPQRCVVIDANADVNTVAAGVWAALRDRVLVADSSTKVTRA</sequence>
<feature type="chain" id="PRO_1000023235" description="Thymidylate kinase">
    <location>
        <begin position="1"/>
        <end position="230"/>
    </location>
</feature>
<feature type="binding site" evidence="1">
    <location>
        <begin position="20"/>
        <end position="27"/>
    </location>
    <ligand>
        <name>ATP</name>
        <dbReference type="ChEBI" id="CHEBI:30616"/>
    </ligand>
</feature>
<comment type="function">
    <text evidence="1">Phosphorylation of dTMP to form dTDP in both de novo and salvage pathways of dTTP synthesis.</text>
</comment>
<comment type="catalytic activity">
    <reaction evidence="1">
        <text>dTMP + ATP = dTDP + ADP</text>
        <dbReference type="Rhea" id="RHEA:13517"/>
        <dbReference type="ChEBI" id="CHEBI:30616"/>
        <dbReference type="ChEBI" id="CHEBI:58369"/>
        <dbReference type="ChEBI" id="CHEBI:63528"/>
        <dbReference type="ChEBI" id="CHEBI:456216"/>
        <dbReference type="EC" id="2.7.4.9"/>
    </reaction>
</comment>
<comment type="similarity">
    <text evidence="1">Belongs to the thymidylate kinase family.</text>
</comment>
<name>KTHY_NITHX</name>
<proteinExistence type="inferred from homology"/>
<evidence type="ECO:0000255" key="1">
    <source>
        <dbReference type="HAMAP-Rule" id="MF_00165"/>
    </source>
</evidence>
<gene>
    <name evidence="1" type="primary">tmk</name>
    <name type="ordered locus">Nham_2010</name>
</gene>
<keyword id="KW-0067">ATP-binding</keyword>
<keyword id="KW-0418">Kinase</keyword>
<keyword id="KW-0545">Nucleotide biosynthesis</keyword>
<keyword id="KW-0547">Nucleotide-binding</keyword>
<keyword id="KW-1185">Reference proteome</keyword>
<keyword id="KW-0808">Transferase</keyword>
<dbReference type="EC" id="2.7.4.9" evidence="1"/>
<dbReference type="EMBL" id="CP000319">
    <property type="protein sequence ID" value="ABE62809.1"/>
    <property type="molecule type" value="Genomic_DNA"/>
</dbReference>
<dbReference type="RefSeq" id="WP_011510489.1">
    <property type="nucleotide sequence ID" value="NC_007964.1"/>
</dbReference>
<dbReference type="SMR" id="Q1QLT8"/>
<dbReference type="STRING" id="323097.Nham_2010"/>
<dbReference type="KEGG" id="nha:Nham_2010"/>
<dbReference type="eggNOG" id="COG0125">
    <property type="taxonomic scope" value="Bacteria"/>
</dbReference>
<dbReference type="HOGENOM" id="CLU_049131_0_0_5"/>
<dbReference type="OrthoDB" id="9774907at2"/>
<dbReference type="Proteomes" id="UP000001953">
    <property type="component" value="Chromosome"/>
</dbReference>
<dbReference type="GO" id="GO:0005829">
    <property type="term" value="C:cytosol"/>
    <property type="evidence" value="ECO:0007669"/>
    <property type="project" value="TreeGrafter"/>
</dbReference>
<dbReference type="GO" id="GO:0005524">
    <property type="term" value="F:ATP binding"/>
    <property type="evidence" value="ECO:0007669"/>
    <property type="project" value="UniProtKB-UniRule"/>
</dbReference>
<dbReference type="GO" id="GO:0004798">
    <property type="term" value="F:dTMP kinase activity"/>
    <property type="evidence" value="ECO:0007669"/>
    <property type="project" value="UniProtKB-UniRule"/>
</dbReference>
<dbReference type="GO" id="GO:0006233">
    <property type="term" value="P:dTDP biosynthetic process"/>
    <property type="evidence" value="ECO:0007669"/>
    <property type="project" value="InterPro"/>
</dbReference>
<dbReference type="GO" id="GO:0006235">
    <property type="term" value="P:dTTP biosynthetic process"/>
    <property type="evidence" value="ECO:0007669"/>
    <property type="project" value="UniProtKB-UniRule"/>
</dbReference>
<dbReference type="GO" id="GO:0006227">
    <property type="term" value="P:dUDP biosynthetic process"/>
    <property type="evidence" value="ECO:0007669"/>
    <property type="project" value="TreeGrafter"/>
</dbReference>
<dbReference type="CDD" id="cd01672">
    <property type="entry name" value="TMPK"/>
    <property type="match status" value="1"/>
</dbReference>
<dbReference type="FunFam" id="3.40.50.300:FF:000225">
    <property type="entry name" value="Thymidylate kinase"/>
    <property type="match status" value="1"/>
</dbReference>
<dbReference type="Gene3D" id="3.40.50.300">
    <property type="entry name" value="P-loop containing nucleotide triphosphate hydrolases"/>
    <property type="match status" value="1"/>
</dbReference>
<dbReference type="HAMAP" id="MF_00165">
    <property type="entry name" value="Thymidylate_kinase"/>
    <property type="match status" value="1"/>
</dbReference>
<dbReference type="InterPro" id="IPR027417">
    <property type="entry name" value="P-loop_NTPase"/>
</dbReference>
<dbReference type="InterPro" id="IPR039430">
    <property type="entry name" value="Thymidylate_kin-like_dom"/>
</dbReference>
<dbReference type="InterPro" id="IPR018095">
    <property type="entry name" value="Thymidylate_kin_CS"/>
</dbReference>
<dbReference type="InterPro" id="IPR018094">
    <property type="entry name" value="Thymidylate_kinase"/>
</dbReference>
<dbReference type="NCBIfam" id="TIGR00041">
    <property type="entry name" value="DTMP_kinase"/>
    <property type="match status" value="1"/>
</dbReference>
<dbReference type="PANTHER" id="PTHR10344">
    <property type="entry name" value="THYMIDYLATE KINASE"/>
    <property type="match status" value="1"/>
</dbReference>
<dbReference type="PANTHER" id="PTHR10344:SF4">
    <property type="entry name" value="UMP-CMP KINASE 2, MITOCHONDRIAL"/>
    <property type="match status" value="1"/>
</dbReference>
<dbReference type="Pfam" id="PF02223">
    <property type="entry name" value="Thymidylate_kin"/>
    <property type="match status" value="1"/>
</dbReference>
<dbReference type="SUPFAM" id="SSF52540">
    <property type="entry name" value="P-loop containing nucleoside triphosphate hydrolases"/>
    <property type="match status" value="1"/>
</dbReference>
<dbReference type="PROSITE" id="PS01331">
    <property type="entry name" value="THYMIDYLATE_KINASE"/>
    <property type="match status" value="1"/>
</dbReference>
<reference key="1">
    <citation type="submission" date="2006-03" db="EMBL/GenBank/DDBJ databases">
        <title>Complete sequence of chromosome of Nitrobacter hamburgensis X14.</title>
        <authorList>
            <consortium name="US DOE Joint Genome Institute"/>
            <person name="Copeland A."/>
            <person name="Lucas S."/>
            <person name="Lapidus A."/>
            <person name="Barry K."/>
            <person name="Detter J.C."/>
            <person name="Glavina del Rio T."/>
            <person name="Hammon N."/>
            <person name="Israni S."/>
            <person name="Dalin E."/>
            <person name="Tice H."/>
            <person name="Pitluck S."/>
            <person name="Chain P."/>
            <person name="Malfatti S."/>
            <person name="Shin M."/>
            <person name="Vergez L."/>
            <person name="Schmutz J."/>
            <person name="Larimer F."/>
            <person name="Land M."/>
            <person name="Hauser L."/>
            <person name="Kyrpides N."/>
            <person name="Ivanova N."/>
            <person name="Ward B."/>
            <person name="Arp D."/>
            <person name="Klotz M."/>
            <person name="Stein L."/>
            <person name="O'Mullan G."/>
            <person name="Starkenburg S."/>
            <person name="Sayavedra L."/>
            <person name="Poret-Peterson A.T."/>
            <person name="Gentry M.E."/>
            <person name="Bruce D."/>
            <person name="Richardson P."/>
        </authorList>
    </citation>
    <scope>NUCLEOTIDE SEQUENCE [LARGE SCALE GENOMIC DNA]</scope>
    <source>
        <strain>DSM 10229 / NCIMB 13809 / X14</strain>
    </source>
</reference>
<organism>
    <name type="scientific">Nitrobacter hamburgensis (strain DSM 10229 / NCIMB 13809 / X14)</name>
    <dbReference type="NCBI Taxonomy" id="323097"/>
    <lineage>
        <taxon>Bacteria</taxon>
        <taxon>Pseudomonadati</taxon>
        <taxon>Pseudomonadota</taxon>
        <taxon>Alphaproteobacteria</taxon>
        <taxon>Hyphomicrobiales</taxon>
        <taxon>Nitrobacteraceae</taxon>
        <taxon>Nitrobacter</taxon>
    </lineage>
</organism>